<feature type="chain" id="PRO_0000384408" description="Probable basic-leucine zipper transcription factor H">
    <location>
        <begin position="1"/>
        <end position="509"/>
    </location>
</feature>
<feature type="domain" description="bZIP" evidence="2">
    <location>
        <begin position="50"/>
        <end position="113"/>
    </location>
</feature>
<feature type="region of interest" description="Disordered" evidence="3">
    <location>
        <begin position="1"/>
        <end position="42"/>
    </location>
</feature>
<feature type="region of interest" description="Basic motif" evidence="2">
    <location>
        <begin position="51"/>
        <end position="77"/>
    </location>
</feature>
<feature type="region of interest" description="Leucine-zipper" evidence="2">
    <location>
        <begin position="78"/>
        <end position="99"/>
    </location>
</feature>
<feature type="region of interest" description="Disordered" evidence="3">
    <location>
        <begin position="134"/>
        <end position="185"/>
    </location>
</feature>
<feature type="region of interest" description="Disordered" evidence="3">
    <location>
        <begin position="223"/>
        <end position="275"/>
    </location>
</feature>
<feature type="region of interest" description="Disordered" evidence="3">
    <location>
        <begin position="290"/>
        <end position="414"/>
    </location>
</feature>
<feature type="region of interest" description="Disordered" evidence="3">
    <location>
        <begin position="465"/>
        <end position="509"/>
    </location>
</feature>
<feature type="compositionally biased region" description="Low complexity" evidence="3">
    <location>
        <begin position="10"/>
        <end position="39"/>
    </location>
</feature>
<feature type="compositionally biased region" description="Low complexity" evidence="3">
    <location>
        <begin position="226"/>
        <end position="248"/>
    </location>
</feature>
<feature type="compositionally biased region" description="Low complexity" evidence="3">
    <location>
        <begin position="255"/>
        <end position="269"/>
    </location>
</feature>
<feature type="compositionally biased region" description="Low complexity" evidence="3">
    <location>
        <begin position="292"/>
        <end position="350"/>
    </location>
</feature>
<feature type="compositionally biased region" description="Low complexity" evidence="3">
    <location>
        <begin position="361"/>
        <end position="414"/>
    </location>
</feature>
<feature type="compositionally biased region" description="Low complexity" evidence="3">
    <location>
        <begin position="465"/>
        <end position="483"/>
    </location>
</feature>
<feature type="compositionally biased region" description="Low complexity" evidence="3">
    <location>
        <begin position="490"/>
        <end position="509"/>
    </location>
</feature>
<accession>Q86AF3</accession>
<accession>Q54ZA5</accession>
<proteinExistence type="inferred from homology"/>
<dbReference type="EMBL" id="AAFI02000021">
    <property type="protein sequence ID" value="EAL68598.1"/>
    <property type="molecule type" value="Genomic_DNA"/>
</dbReference>
<dbReference type="RefSeq" id="XP_642532.1">
    <property type="nucleotide sequence ID" value="XM_637440.1"/>
</dbReference>
<dbReference type="SMR" id="Q86AF3"/>
<dbReference type="FunCoup" id="Q86AF3">
    <property type="interactions" value="877"/>
</dbReference>
<dbReference type="STRING" id="44689.Q86AF3"/>
<dbReference type="GlyGen" id="Q86AF3">
    <property type="glycosylation" value="1 site"/>
</dbReference>
<dbReference type="PaxDb" id="44689-DDB0220095"/>
<dbReference type="EnsemblProtists" id="EAL68598">
    <property type="protein sequence ID" value="EAL68598"/>
    <property type="gene ID" value="DDB_G0277681"/>
</dbReference>
<dbReference type="GeneID" id="8621158"/>
<dbReference type="KEGG" id="ddi:DDB_G0277681"/>
<dbReference type="dictyBase" id="DDB_G0277681">
    <property type="gene designation" value="bzpH"/>
</dbReference>
<dbReference type="VEuPathDB" id="AmoebaDB:DDB_G0277681"/>
<dbReference type="eggNOG" id="ENOG502RBSV">
    <property type="taxonomic scope" value="Eukaryota"/>
</dbReference>
<dbReference type="HOGENOM" id="CLU_535800_0_0_1"/>
<dbReference type="InParanoid" id="Q86AF3"/>
<dbReference type="OMA" id="MLQNENY"/>
<dbReference type="PRO" id="PR:Q86AF3"/>
<dbReference type="Proteomes" id="UP000002195">
    <property type="component" value="Chromosome 2"/>
</dbReference>
<dbReference type="GO" id="GO:0005634">
    <property type="term" value="C:nucleus"/>
    <property type="evidence" value="ECO:0007669"/>
    <property type="project" value="UniProtKB-SubCell"/>
</dbReference>
<dbReference type="GO" id="GO:0003677">
    <property type="term" value="F:DNA binding"/>
    <property type="evidence" value="ECO:0007669"/>
    <property type="project" value="UniProtKB-KW"/>
</dbReference>
<dbReference type="GO" id="GO:0003700">
    <property type="term" value="F:DNA-binding transcription factor activity"/>
    <property type="evidence" value="ECO:0007669"/>
    <property type="project" value="InterPro"/>
</dbReference>
<dbReference type="CDD" id="cd14686">
    <property type="entry name" value="bZIP"/>
    <property type="match status" value="1"/>
</dbReference>
<dbReference type="Gene3D" id="1.20.5.170">
    <property type="match status" value="1"/>
</dbReference>
<dbReference type="InterPro" id="IPR004827">
    <property type="entry name" value="bZIP"/>
</dbReference>
<dbReference type="InterPro" id="IPR046347">
    <property type="entry name" value="bZIP_sf"/>
</dbReference>
<dbReference type="Pfam" id="PF00170">
    <property type="entry name" value="bZIP_1"/>
    <property type="match status" value="1"/>
</dbReference>
<dbReference type="PRINTS" id="PR00041">
    <property type="entry name" value="LEUZIPPRCREB"/>
</dbReference>
<dbReference type="SMART" id="SM00338">
    <property type="entry name" value="BRLZ"/>
    <property type="match status" value="1"/>
</dbReference>
<dbReference type="SUPFAM" id="SSF57959">
    <property type="entry name" value="Leucine zipper domain"/>
    <property type="match status" value="1"/>
</dbReference>
<dbReference type="PROSITE" id="PS50217">
    <property type="entry name" value="BZIP"/>
    <property type="match status" value="1"/>
</dbReference>
<dbReference type="PROSITE" id="PS00036">
    <property type="entry name" value="BZIP_BASIC"/>
    <property type="match status" value="1"/>
</dbReference>
<organism>
    <name type="scientific">Dictyostelium discoideum</name>
    <name type="common">Social amoeba</name>
    <dbReference type="NCBI Taxonomy" id="44689"/>
    <lineage>
        <taxon>Eukaryota</taxon>
        <taxon>Amoebozoa</taxon>
        <taxon>Evosea</taxon>
        <taxon>Eumycetozoa</taxon>
        <taxon>Dictyostelia</taxon>
        <taxon>Dictyosteliales</taxon>
        <taxon>Dictyosteliaceae</taxon>
        <taxon>Dictyostelium</taxon>
    </lineage>
</organism>
<reference key="1">
    <citation type="journal article" date="2002" name="Nature">
        <title>Sequence and analysis of chromosome 2 of Dictyostelium discoideum.</title>
        <authorList>
            <person name="Gloeckner G."/>
            <person name="Eichinger L."/>
            <person name="Szafranski K."/>
            <person name="Pachebat J.A."/>
            <person name="Bankier A.T."/>
            <person name="Dear P.H."/>
            <person name="Lehmann R."/>
            <person name="Baumgart C."/>
            <person name="Parra G."/>
            <person name="Abril J.F."/>
            <person name="Guigo R."/>
            <person name="Kumpf K."/>
            <person name="Tunggal B."/>
            <person name="Cox E.C."/>
            <person name="Quail M.A."/>
            <person name="Platzer M."/>
            <person name="Rosenthal A."/>
            <person name="Noegel A.A."/>
        </authorList>
    </citation>
    <scope>NUCLEOTIDE SEQUENCE [LARGE SCALE GENOMIC DNA]</scope>
    <source>
        <strain>AX4</strain>
    </source>
</reference>
<reference key="2">
    <citation type="journal article" date="2005" name="Nature">
        <title>The genome of the social amoeba Dictyostelium discoideum.</title>
        <authorList>
            <person name="Eichinger L."/>
            <person name="Pachebat J.A."/>
            <person name="Gloeckner G."/>
            <person name="Rajandream M.A."/>
            <person name="Sucgang R."/>
            <person name="Berriman M."/>
            <person name="Song J."/>
            <person name="Olsen R."/>
            <person name="Szafranski K."/>
            <person name="Xu Q."/>
            <person name="Tunggal B."/>
            <person name="Kummerfeld S."/>
            <person name="Madera M."/>
            <person name="Konfortov B.A."/>
            <person name="Rivero F."/>
            <person name="Bankier A.T."/>
            <person name="Lehmann R."/>
            <person name="Hamlin N."/>
            <person name="Davies R."/>
            <person name="Gaudet P."/>
            <person name="Fey P."/>
            <person name="Pilcher K."/>
            <person name="Chen G."/>
            <person name="Saunders D."/>
            <person name="Sodergren E.J."/>
            <person name="Davis P."/>
            <person name="Kerhornou A."/>
            <person name="Nie X."/>
            <person name="Hall N."/>
            <person name="Anjard C."/>
            <person name="Hemphill L."/>
            <person name="Bason N."/>
            <person name="Farbrother P."/>
            <person name="Desany B."/>
            <person name="Just E."/>
            <person name="Morio T."/>
            <person name="Rost R."/>
            <person name="Churcher C.M."/>
            <person name="Cooper J."/>
            <person name="Haydock S."/>
            <person name="van Driessche N."/>
            <person name="Cronin A."/>
            <person name="Goodhead I."/>
            <person name="Muzny D.M."/>
            <person name="Mourier T."/>
            <person name="Pain A."/>
            <person name="Lu M."/>
            <person name="Harper D."/>
            <person name="Lindsay R."/>
            <person name="Hauser H."/>
            <person name="James K.D."/>
            <person name="Quiles M."/>
            <person name="Madan Babu M."/>
            <person name="Saito T."/>
            <person name="Buchrieser C."/>
            <person name="Wardroper A."/>
            <person name="Felder M."/>
            <person name="Thangavelu M."/>
            <person name="Johnson D."/>
            <person name="Knights A."/>
            <person name="Loulseged H."/>
            <person name="Mungall K.L."/>
            <person name="Oliver K."/>
            <person name="Price C."/>
            <person name="Quail M.A."/>
            <person name="Urushihara H."/>
            <person name="Hernandez J."/>
            <person name="Rabbinowitsch E."/>
            <person name="Steffen D."/>
            <person name="Sanders M."/>
            <person name="Ma J."/>
            <person name="Kohara Y."/>
            <person name="Sharp S."/>
            <person name="Simmonds M.N."/>
            <person name="Spiegler S."/>
            <person name="Tivey A."/>
            <person name="Sugano S."/>
            <person name="White B."/>
            <person name="Walker D."/>
            <person name="Woodward J.R."/>
            <person name="Winckler T."/>
            <person name="Tanaka Y."/>
            <person name="Shaulsky G."/>
            <person name="Schleicher M."/>
            <person name="Weinstock G.M."/>
            <person name="Rosenthal A."/>
            <person name="Cox E.C."/>
            <person name="Chisholm R.L."/>
            <person name="Gibbs R.A."/>
            <person name="Loomis W.F."/>
            <person name="Platzer M."/>
            <person name="Kay R.R."/>
            <person name="Williams J.G."/>
            <person name="Dear P.H."/>
            <person name="Noegel A.A."/>
            <person name="Barrell B.G."/>
            <person name="Kuspa A."/>
        </authorList>
    </citation>
    <scope>NUCLEOTIDE SEQUENCE [LARGE SCALE GENOMIC DNA]</scope>
    <source>
        <strain>AX4</strain>
    </source>
</reference>
<reference key="3">
    <citation type="journal article" date="2006" name="Development">
        <title>bZIP transcription factor interactions regulate DIF responses in Dictyostelium.</title>
        <authorList>
            <person name="Huang E."/>
            <person name="Blagg S.L."/>
            <person name="Keller T."/>
            <person name="Katoh M."/>
            <person name="Shaulsky G."/>
            <person name="Thompson C.R.L."/>
        </authorList>
    </citation>
    <scope>IDENTIFICATION</scope>
</reference>
<protein>
    <recommendedName>
        <fullName>Probable basic-leucine zipper transcription factor H</fullName>
    </recommendedName>
</protein>
<comment type="function">
    <text evidence="1">Probable transcriptional regulator.</text>
</comment>
<comment type="subcellular location">
    <subcellularLocation>
        <location evidence="2">Nucleus</location>
    </subcellularLocation>
</comment>
<comment type="similarity">
    <text evidence="4">Belongs to the bZIP family.</text>
</comment>
<name>BZPH_DICDI</name>
<evidence type="ECO:0000250" key="1"/>
<evidence type="ECO:0000255" key="2">
    <source>
        <dbReference type="PROSITE-ProRule" id="PRU00978"/>
    </source>
</evidence>
<evidence type="ECO:0000256" key="3">
    <source>
        <dbReference type="SAM" id="MobiDB-lite"/>
    </source>
</evidence>
<evidence type="ECO:0000305" key="4"/>
<keyword id="KW-0238">DNA-binding</keyword>
<keyword id="KW-0539">Nucleus</keyword>
<keyword id="KW-1185">Reference proteome</keyword>
<keyword id="KW-0804">Transcription</keyword>
<keyword id="KW-0805">Transcription regulation</keyword>
<sequence>MMNSPRSLDSSDGSVDSSSVYSGTSSFGSSFTSSTGSGFTNSMLFDDEEAKKKKIRQMQNRQSAAQYRERKKEYLEKLETIVDNLESDRNQLLQQTKQLGMLQNENYLKINQLEEQIESALRENNDLKSRLSDLLSKQQPHDNSNSNSNSNNNSNVSPNNSINILNNNNSSSSNNNNNNSNSNNGGIGSFSNILNNNINNNISSSSPSTPSCSSPSFLEGRHFSHLQQQQQQQPQQQNSPQILQSPIPLQHSPLPIQQISPSSPNQNINRRSRFNIGESRERSILNPISIENVNNNNNNNIKLNGSGDMDTSSDNNSSMNINSINNSSNLNGFNGLSSPNQQPNSPSNRSQPKRQRDLFLQQQQQQQHSDPSSPNISSNNLLLLNNPNGGINSNNNSNSNNSNNSNNSNNIINNNNTSYTPPLASFTSILSIASSPSSSPVISSLAQLSSSPNYNSGGFSSFIDSNNNNSNNNNSGLENNSPSRRYKFHNGGINNISSGNLNSLKGIPK</sequence>
<gene>
    <name type="primary">bzpH</name>
    <name type="ORF">DDB_G0277681</name>
</gene>